<accession>Q8HXY9</accession>
<accession>Q2KIY4</accession>
<accession>Q8I031</accession>
<accession>Q8I033</accession>
<dbReference type="EMBL" id="AB081003">
    <property type="protein sequence ID" value="BAC11952.1"/>
    <property type="status" value="ALT_FRAME"/>
    <property type="molecule type" value="Genomic_DNA"/>
</dbReference>
<dbReference type="EMBL" id="AB081004">
    <property type="protein sequence ID" value="BAC11953.1"/>
    <property type="molecule type" value="mRNA"/>
</dbReference>
<dbReference type="EMBL" id="AB081095">
    <property type="protein sequence ID" value="BAC15593.1"/>
    <property type="molecule type" value="Genomic_DNA"/>
</dbReference>
<dbReference type="EMBL" id="BC112462">
    <property type="protein sequence ID" value="AAI12463.1"/>
    <property type="molecule type" value="mRNA"/>
</dbReference>
<dbReference type="RefSeq" id="NP_776693.1">
    <molecule id="Q8HXY9-1"/>
    <property type="nucleotide sequence ID" value="NM_174268.1"/>
</dbReference>
<dbReference type="SMR" id="Q8HXY9"/>
<dbReference type="FunCoup" id="Q8HXY9">
    <property type="interactions" value="3839"/>
</dbReference>
<dbReference type="STRING" id="9913.ENSBTAP00000069228"/>
<dbReference type="PaxDb" id="9913-ENSBTAP00000020504"/>
<dbReference type="PeptideAtlas" id="Q8HXY9"/>
<dbReference type="GeneID" id="281682"/>
<dbReference type="KEGG" id="bta:281682"/>
<dbReference type="CTD" id="10428"/>
<dbReference type="VEuPathDB" id="HostDB:ENSBTAG00000015427"/>
<dbReference type="eggNOG" id="KOG4776">
    <property type="taxonomic scope" value="Eukaryota"/>
</dbReference>
<dbReference type="HOGENOM" id="CLU_080190_0_0_1"/>
<dbReference type="InParanoid" id="Q8HXY9"/>
<dbReference type="OMA" id="LDWAAYV"/>
<dbReference type="OrthoDB" id="445677at2759"/>
<dbReference type="TreeFam" id="TF313182"/>
<dbReference type="Proteomes" id="UP000009136">
    <property type="component" value="Chromosome 18"/>
</dbReference>
<dbReference type="Bgee" id="ENSBTAG00000015427">
    <property type="expression patterns" value="Expressed in dorsal thalamus and 104 other cell types or tissues"/>
</dbReference>
<dbReference type="GO" id="GO:0000812">
    <property type="term" value="C:Swr1 complex"/>
    <property type="evidence" value="ECO:0000318"/>
    <property type="project" value="GO_Central"/>
</dbReference>
<dbReference type="GO" id="GO:0006338">
    <property type="term" value="P:chromatin remodeling"/>
    <property type="evidence" value="ECO:0000318"/>
    <property type="project" value="GO_Central"/>
</dbReference>
<dbReference type="InterPro" id="IPR011421">
    <property type="entry name" value="BCNT-C"/>
</dbReference>
<dbReference type="InterPro" id="IPR027124">
    <property type="entry name" value="Swc5/CFDP1/2"/>
</dbReference>
<dbReference type="PANTHER" id="PTHR48407">
    <property type="entry name" value="CRANIOFACIAL DEVELOPMENT PROTEIN 1"/>
    <property type="match status" value="1"/>
</dbReference>
<dbReference type="PANTHER" id="PTHR48407:SF1">
    <property type="entry name" value="CRANIOFACIAL DEVELOPMENT PROTEIN 1"/>
    <property type="match status" value="1"/>
</dbReference>
<dbReference type="Pfam" id="PF07572">
    <property type="entry name" value="BCNT"/>
    <property type="match status" value="1"/>
</dbReference>
<dbReference type="PROSITE" id="PS51279">
    <property type="entry name" value="BCNT_C"/>
    <property type="match status" value="1"/>
</dbReference>
<reference key="1">
    <citation type="journal article" date="2003" name="Mol. Biol. Evol.">
        <title>A transposable element-mediated gene divergence that directly produces a novel type bovine Bcnt protein including the endonuclease domain of RTE-1.</title>
        <authorList>
            <person name="Iwashita S."/>
            <person name="Osada N."/>
            <person name="Itoh T."/>
            <person name="Sezaki M."/>
            <person name="Oshima K."/>
            <person name="Hashimoto E."/>
            <person name="Kitagawa-Arita Y."/>
            <person name="Takahashi I."/>
            <person name="Masui T."/>
            <person name="Hashimoto K."/>
            <person name="Makalowski W."/>
        </authorList>
    </citation>
    <scope>NUCLEOTIDE SEQUENCE [GENOMIC DNA / MRNA] (ISOFORMS 1 AND 2)</scope>
    <scope>TISSUE SPECIFICITY</scope>
    <scope>GENE DUPLICATION</scope>
    <source>
        <strain>Jersey</strain>
        <tissue>Kidney</tissue>
    </source>
</reference>
<reference key="2">
    <citation type="submission" date="2006-01" db="EMBL/GenBank/DDBJ databases">
        <authorList>
            <consortium name="NIH - Mammalian Gene Collection (MGC) project"/>
        </authorList>
    </citation>
    <scope>NUCLEOTIDE SEQUENCE [LARGE SCALE MRNA] (ISOFORM 2)</scope>
    <source>
        <strain>Hereford</strain>
        <tissue>Testis</tissue>
    </source>
</reference>
<name>CFDP1_BOVIN</name>
<proteinExistence type="evidence at transcript level"/>
<evidence type="ECO:0000250" key="1"/>
<evidence type="ECO:0000250" key="2">
    <source>
        <dbReference type="UniProtKB" id="Q75UQ2"/>
    </source>
</evidence>
<evidence type="ECO:0000250" key="3">
    <source>
        <dbReference type="UniProtKB" id="Q9UEE9"/>
    </source>
</evidence>
<evidence type="ECO:0000255" key="4">
    <source>
        <dbReference type="PROSITE-ProRule" id="PRU00610"/>
    </source>
</evidence>
<evidence type="ECO:0000256" key="5">
    <source>
        <dbReference type="SAM" id="MobiDB-lite"/>
    </source>
</evidence>
<evidence type="ECO:0000269" key="6">
    <source>
    </source>
</evidence>
<evidence type="ECO:0000303" key="7">
    <source>
    </source>
</evidence>
<evidence type="ECO:0000303" key="8">
    <source ref="2"/>
</evidence>
<evidence type="ECO:0000305" key="9"/>
<sequence>MEEFDSEDFSTSEEDEDYVPSGGEYSEDDINELVKEDEVDGEEETQKTKGTKRKAESVLARKRKQGGLSLEEDEEDANEESGGSSSEEEDAATEQQKGVESEDARKKKEDELWASFLNDVGPKSKVPPSTHVKTGEETEETSSSHLVKAERLEKPKETEKVKITKVFDFAGEEVRVIKEVDATSKEAKSFFKQNEKEKPQSNVPPAVPSLPAGSGLKRSSGMSSLLGKIGAKKQKMSTLEKSKLDWESFKEEEGIGEELAIHNRGKEGYIERKAFLDRVDHRQFEIERDLRLSKMKP</sequence>
<keyword id="KW-0025">Alternative splicing</keyword>
<keyword id="KW-0217">Developmental protein</keyword>
<keyword id="KW-1017">Isopeptide bond</keyword>
<keyword id="KW-0488">Methylation</keyword>
<keyword id="KW-0597">Phosphoprotein</keyword>
<keyword id="KW-1185">Reference proteome</keyword>
<keyword id="KW-0832">Ubl conjugation</keyword>
<feature type="chain" id="PRO_0000212491" description="Craniofacial development protein 1">
    <location>
        <begin position="1"/>
        <end position="297"/>
    </location>
</feature>
<feature type="domain" description="BCNT-C" evidence="4">
    <location>
        <begin position="216"/>
        <end position="297"/>
    </location>
</feature>
<feature type="region of interest" description="Disordered" evidence="5">
    <location>
        <begin position="1"/>
        <end position="157"/>
    </location>
</feature>
<feature type="region of interest" description="Hydrophilic">
    <location>
        <begin position="176"/>
        <end position="215"/>
    </location>
</feature>
<feature type="region of interest" description="Disordered" evidence="5">
    <location>
        <begin position="190"/>
        <end position="222"/>
    </location>
</feature>
<feature type="compositionally biased region" description="Acidic residues" evidence="5">
    <location>
        <begin position="1"/>
        <end position="18"/>
    </location>
</feature>
<feature type="compositionally biased region" description="Acidic residues" evidence="5">
    <location>
        <begin position="25"/>
        <end position="43"/>
    </location>
</feature>
<feature type="compositionally biased region" description="Acidic residues" evidence="5">
    <location>
        <begin position="70"/>
        <end position="79"/>
    </location>
</feature>
<feature type="compositionally biased region" description="Basic and acidic residues" evidence="5">
    <location>
        <begin position="97"/>
        <end position="111"/>
    </location>
</feature>
<feature type="compositionally biased region" description="Basic and acidic residues" evidence="5">
    <location>
        <begin position="147"/>
        <end position="157"/>
    </location>
</feature>
<feature type="compositionally biased region" description="Basic and acidic residues" evidence="5">
    <location>
        <begin position="190"/>
        <end position="199"/>
    </location>
</feature>
<feature type="modified residue" description="Phosphoserine" evidence="2">
    <location>
        <position position="81"/>
    </location>
</feature>
<feature type="modified residue" description="Phosphoserine" evidence="2">
    <location>
        <position position="84"/>
    </location>
</feature>
<feature type="modified residue" description="Phosphoserine" evidence="2">
    <location>
        <position position="85"/>
    </location>
</feature>
<feature type="modified residue" description="Phosphoserine" evidence="3">
    <location>
        <position position="115"/>
    </location>
</feature>
<feature type="modified residue" description="Phosphoserine" evidence="3">
    <location>
        <position position="214"/>
    </location>
</feature>
<feature type="modified residue" description="N6-methyllysine" evidence="3">
    <location>
        <position position="217"/>
    </location>
</feature>
<feature type="modified residue" description="Phosphoserine" evidence="3">
    <location>
        <position position="248"/>
    </location>
</feature>
<feature type="cross-link" description="Glycyl lysine isopeptide (Lys-Gly) (interchain with G-Cter in SUMO2)" evidence="3">
    <location>
        <position position="148"/>
    </location>
</feature>
<feature type="splice variant" id="VSP_016241" description="In isoform 2." evidence="7 8">
    <location>
        <begin position="216"/>
        <end position="297"/>
    </location>
</feature>
<comment type="function">
    <text evidence="1">May play a role during embryogenesis.</text>
</comment>
<comment type="alternative products">
    <event type="alternative splicing"/>
    <isoform>
        <id>Q8HXY9-1</id>
        <name>1</name>
        <sequence type="displayed"/>
    </isoform>
    <isoform>
        <id>Q8HXY9-2</id>
        <name>2</name>
        <sequence type="described" ref="VSP_016241"/>
    </isoform>
</comment>
<comment type="tissue specificity">
    <text evidence="6">Brain.</text>
</comment>
<comment type="miscellaneous">
    <text>Gene duplication of the ancestral BCNT gene leads to the h-type BCNT (CFDP1) gene and the p97BCNT (CFDP2) gene. The latter contains a region derived from the endonuclease domain of a retrotransposable element RTE-1. This repetitive sequence associated with the BCNT gene is specific to Ruminantia.</text>
</comment>
<comment type="sequence caution" evidence="9">
    <conflict type="frameshift">
        <sequence resource="EMBL-CDS" id="BAC11952"/>
    </conflict>
</comment>
<protein>
    <recommendedName>
        <fullName>Craniofacial development protein 1</fullName>
    </recommendedName>
    <alternativeName>
        <fullName>Bucentaur</fullName>
    </alternativeName>
    <alternativeName>
        <fullName>h-type BCNT protein</fullName>
    </alternativeName>
</protein>
<gene>
    <name type="primary">CFDP1</name>
</gene>
<organism>
    <name type="scientific">Bos taurus</name>
    <name type="common">Bovine</name>
    <dbReference type="NCBI Taxonomy" id="9913"/>
    <lineage>
        <taxon>Eukaryota</taxon>
        <taxon>Metazoa</taxon>
        <taxon>Chordata</taxon>
        <taxon>Craniata</taxon>
        <taxon>Vertebrata</taxon>
        <taxon>Euteleostomi</taxon>
        <taxon>Mammalia</taxon>
        <taxon>Eutheria</taxon>
        <taxon>Laurasiatheria</taxon>
        <taxon>Artiodactyla</taxon>
        <taxon>Ruminantia</taxon>
        <taxon>Pecora</taxon>
        <taxon>Bovidae</taxon>
        <taxon>Bovinae</taxon>
        <taxon>Bos</taxon>
    </lineage>
</organism>